<comment type="function">
    <text evidence="1">Catalyzes the anaerobic formation of alpha-ketobutyrate and ammonia from threonine in a two-step reaction. The first step involved a dehydration of threonine and a production of enamine intermediates (aminocrotonate), which tautomerizes to its imine form (iminobutyrate). Both intermediates are unstable and short-lived. The second step is the nonenzymatic hydrolysis of the enamine/imine intermediates to form 2-ketobutyrate and free ammonia. In the low water environment of the cell, the second step is accelerated by RidA (By similarity).</text>
</comment>
<comment type="catalytic activity">
    <reaction>
        <text>L-threonine = 2-oxobutanoate + NH4(+)</text>
        <dbReference type="Rhea" id="RHEA:22108"/>
        <dbReference type="ChEBI" id="CHEBI:16763"/>
        <dbReference type="ChEBI" id="CHEBI:28938"/>
        <dbReference type="ChEBI" id="CHEBI:57926"/>
        <dbReference type="EC" id="4.3.1.19"/>
    </reaction>
</comment>
<comment type="cofactor">
    <cofactor evidence="1">
        <name>pyridoxal 5'-phosphate</name>
        <dbReference type="ChEBI" id="CHEBI:597326"/>
    </cofactor>
</comment>
<comment type="activity regulation">
    <text evidence="1">Each protein molecule can bind up to four molecules of AMP, which act as an allosteric activator to the enzyme.</text>
</comment>
<comment type="pathway">
    <text>Amino-acid degradation; L-threonine degradation via propanoate pathway; propanoate from L-threonine: step 1/4.</text>
</comment>
<comment type="subunit">
    <text evidence="1">In the native structure, TdcB is in a dimeric form, whereas in the TdcB-AMP complex, it exists in a tetrameric form (dimer of dimers).</text>
</comment>
<comment type="similarity">
    <text evidence="2">Belongs to the serine/threonine dehydratase family.</text>
</comment>
<accession>Q8NWQ4</accession>
<reference key="1">
    <citation type="journal article" date="2002" name="Lancet">
        <title>Genome and virulence determinants of high virulence community-acquired MRSA.</title>
        <authorList>
            <person name="Baba T."/>
            <person name="Takeuchi F."/>
            <person name="Kuroda M."/>
            <person name="Yuzawa H."/>
            <person name="Aoki K."/>
            <person name="Oguchi A."/>
            <person name="Nagai Y."/>
            <person name="Iwama N."/>
            <person name="Asano K."/>
            <person name="Naimi T."/>
            <person name="Kuroda H."/>
            <person name="Cui L."/>
            <person name="Yamamoto K."/>
            <person name="Hiramatsu K."/>
        </authorList>
    </citation>
    <scope>NUCLEOTIDE SEQUENCE [LARGE SCALE GENOMIC DNA]</scope>
    <source>
        <strain>MW2</strain>
    </source>
</reference>
<name>TDCB_STAAW</name>
<protein>
    <recommendedName>
        <fullName>L-threonine dehydratase catabolic TdcB</fullName>
        <ecNumber>4.3.1.19</ecNumber>
    </recommendedName>
    <alternativeName>
        <fullName>Threonine deaminase</fullName>
    </alternativeName>
</protein>
<sequence>MTTNTVTLQTAHIVSLGDIEEAKASIKPFIRRTPLIKSMYLSQSITKGNVFLKLENMQFTGSFKFRGASNKINHLTDEQKEKGIIAASAGNHAQGVALTAKLLGIDATIVMPETAPQAKQQATKGYGAKVILKGKNFNETRLYMEELAKENGMTIVHPYDDKFVMAGQGTIGLEILDDIWNVNTVIVPVGGGGLIAGIATALKSFNPSIHIIGVQSENVHGMAESFYKRDLTEHRVDSTIADGCDVKVPGEQTYEVVKHLVDEFILVTEEEIEHAMKDLMQRAKIITEGAGALPTAAILSGKINNKWLEDKNVVALVSGGNVDLTRVSGVIEHGLNIADTSKGVVG</sequence>
<gene>
    <name type="primary">tdcB</name>
    <name type="ordered locus">MW1327</name>
</gene>
<keyword id="KW-0021">Allosteric enzyme</keyword>
<keyword id="KW-0456">Lyase</keyword>
<keyword id="KW-0547">Nucleotide-binding</keyword>
<keyword id="KW-0663">Pyridoxal phosphate</keyword>
<evidence type="ECO:0000250" key="1"/>
<evidence type="ECO:0000305" key="2"/>
<proteinExistence type="inferred from homology"/>
<dbReference type="EC" id="4.3.1.19"/>
<dbReference type="EMBL" id="BA000033">
    <property type="protein sequence ID" value="BAB95192.1"/>
    <property type="molecule type" value="Genomic_DNA"/>
</dbReference>
<dbReference type="RefSeq" id="WP_000210828.1">
    <property type="nucleotide sequence ID" value="NC_003923.1"/>
</dbReference>
<dbReference type="SMR" id="Q8NWQ4"/>
<dbReference type="KEGG" id="sam:MW1327"/>
<dbReference type="HOGENOM" id="CLU_021152_4_2_9"/>
<dbReference type="UniPathway" id="UPA00052">
    <property type="reaction ID" value="UER00507"/>
</dbReference>
<dbReference type="GO" id="GO:0003941">
    <property type="term" value="F:L-serine ammonia-lyase activity"/>
    <property type="evidence" value="ECO:0007669"/>
    <property type="project" value="TreeGrafter"/>
</dbReference>
<dbReference type="GO" id="GO:0000166">
    <property type="term" value="F:nucleotide binding"/>
    <property type="evidence" value="ECO:0007669"/>
    <property type="project" value="UniProtKB-KW"/>
</dbReference>
<dbReference type="GO" id="GO:0030170">
    <property type="term" value="F:pyridoxal phosphate binding"/>
    <property type="evidence" value="ECO:0007669"/>
    <property type="project" value="InterPro"/>
</dbReference>
<dbReference type="GO" id="GO:0004794">
    <property type="term" value="F:threonine deaminase activity"/>
    <property type="evidence" value="ECO:0007669"/>
    <property type="project" value="UniProtKB-EC"/>
</dbReference>
<dbReference type="GO" id="GO:0009097">
    <property type="term" value="P:isoleucine biosynthetic process"/>
    <property type="evidence" value="ECO:0007669"/>
    <property type="project" value="TreeGrafter"/>
</dbReference>
<dbReference type="GO" id="GO:0006565">
    <property type="term" value="P:L-serine catabolic process"/>
    <property type="evidence" value="ECO:0007669"/>
    <property type="project" value="TreeGrafter"/>
</dbReference>
<dbReference type="GO" id="GO:0070689">
    <property type="term" value="P:L-threonine catabolic process to propionate"/>
    <property type="evidence" value="ECO:0007669"/>
    <property type="project" value="UniProtKB-UniPathway"/>
</dbReference>
<dbReference type="CDD" id="cd01562">
    <property type="entry name" value="Thr-dehyd"/>
    <property type="match status" value="1"/>
</dbReference>
<dbReference type="FunFam" id="3.40.50.1100:FF:000007">
    <property type="entry name" value="L-threonine dehydratase catabolic TdcB"/>
    <property type="match status" value="1"/>
</dbReference>
<dbReference type="Gene3D" id="3.40.50.1100">
    <property type="match status" value="2"/>
</dbReference>
<dbReference type="InterPro" id="IPR050147">
    <property type="entry name" value="Ser/Thr_Dehydratase"/>
</dbReference>
<dbReference type="InterPro" id="IPR000634">
    <property type="entry name" value="Ser/Thr_deHydtase_PyrdxlP-BS"/>
</dbReference>
<dbReference type="InterPro" id="IPR005789">
    <property type="entry name" value="Thr_deHydtase_catblc"/>
</dbReference>
<dbReference type="InterPro" id="IPR001926">
    <property type="entry name" value="TrpB-like_PALP"/>
</dbReference>
<dbReference type="InterPro" id="IPR036052">
    <property type="entry name" value="TrpB-like_PALP_sf"/>
</dbReference>
<dbReference type="NCBIfam" id="TIGR01127">
    <property type="entry name" value="ilvA_1Cterm"/>
    <property type="match status" value="1"/>
</dbReference>
<dbReference type="NCBIfam" id="NF006389">
    <property type="entry name" value="PRK08638.1"/>
    <property type="match status" value="1"/>
</dbReference>
<dbReference type="PANTHER" id="PTHR48078:SF6">
    <property type="entry name" value="L-THREONINE DEHYDRATASE CATABOLIC TDCB"/>
    <property type="match status" value="1"/>
</dbReference>
<dbReference type="PANTHER" id="PTHR48078">
    <property type="entry name" value="THREONINE DEHYDRATASE, MITOCHONDRIAL-RELATED"/>
    <property type="match status" value="1"/>
</dbReference>
<dbReference type="Pfam" id="PF00291">
    <property type="entry name" value="PALP"/>
    <property type="match status" value="1"/>
</dbReference>
<dbReference type="SUPFAM" id="SSF53686">
    <property type="entry name" value="Tryptophan synthase beta subunit-like PLP-dependent enzymes"/>
    <property type="match status" value="1"/>
</dbReference>
<dbReference type="PROSITE" id="PS00165">
    <property type="entry name" value="DEHYDRATASE_SER_THR"/>
    <property type="match status" value="1"/>
</dbReference>
<feature type="chain" id="PRO_0000287331" description="L-threonine dehydratase catabolic TdcB">
    <location>
        <begin position="1"/>
        <end position="346"/>
    </location>
</feature>
<feature type="binding site" evidence="1">
    <location>
        <begin position="59"/>
        <end position="60"/>
    </location>
    <ligand>
        <name>AMP</name>
        <dbReference type="ChEBI" id="CHEBI:456215"/>
    </ligand>
</feature>
<feature type="binding site" evidence="1">
    <location>
        <position position="94"/>
    </location>
    <ligand>
        <name>AMP</name>
        <dbReference type="ChEBI" id="CHEBI:456215"/>
    </ligand>
</feature>
<feature type="binding site" evidence="1">
    <location>
        <begin position="125"/>
        <end position="126"/>
    </location>
    <ligand>
        <name>AMP</name>
        <dbReference type="ChEBI" id="CHEBI:456215"/>
    </ligand>
</feature>
<feature type="binding site" evidence="1">
    <location>
        <position position="321"/>
    </location>
    <ligand>
        <name>AMP</name>
        <dbReference type="ChEBI" id="CHEBI:456215"/>
    </ligand>
</feature>
<feature type="modified residue" description="N6-(pyridoxal phosphate)lysine" evidence="1">
    <location>
        <position position="64"/>
    </location>
</feature>
<organism>
    <name type="scientific">Staphylococcus aureus (strain MW2)</name>
    <dbReference type="NCBI Taxonomy" id="196620"/>
    <lineage>
        <taxon>Bacteria</taxon>
        <taxon>Bacillati</taxon>
        <taxon>Bacillota</taxon>
        <taxon>Bacilli</taxon>
        <taxon>Bacillales</taxon>
        <taxon>Staphylococcaceae</taxon>
        <taxon>Staphylococcus</taxon>
    </lineage>
</organism>